<protein>
    <recommendedName>
        <fullName evidence="1">Probable cytosol aminopeptidase</fullName>
        <ecNumber evidence="1">3.4.11.1</ecNumber>
    </recommendedName>
    <alternativeName>
        <fullName evidence="1">Leucine aminopeptidase</fullName>
        <shortName evidence="1">LAP</shortName>
        <ecNumber evidence="1">3.4.11.10</ecNumber>
    </alternativeName>
    <alternativeName>
        <fullName evidence="1">Leucyl aminopeptidase</fullName>
    </alternativeName>
</protein>
<keyword id="KW-0031">Aminopeptidase</keyword>
<keyword id="KW-0963">Cytoplasm</keyword>
<keyword id="KW-0378">Hydrolase</keyword>
<keyword id="KW-0464">Manganese</keyword>
<keyword id="KW-0479">Metal-binding</keyword>
<keyword id="KW-0645">Protease</keyword>
<proteinExistence type="inferred from homology"/>
<accession>B5Z3L7</accession>
<feature type="chain" id="PRO_1000098320" description="Probable cytosol aminopeptidase">
    <location>
        <begin position="1"/>
        <end position="503"/>
    </location>
</feature>
<feature type="active site" evidence="1">
    <location>
        <position position="282"/>
    </location>
</feature>
<feature type="active site" evidence="1">
    <location>
        <position position="356"/>
    </location>
</feature>
<feature type="binding site" evidence="1">
    <location>
        <position position="270"/>
    </location>
    <ligand>
        <name>Mn(2+)</name>
        <dbReference type="ChEBI" id="CHEBI:29035"/>
        <label>2</label>
    </ligand>
</feature>
<feature type="binding site" evidence="1">
    <location>
        <position position="275"/>
    </location>
    <ligand>
        <name>Mn(2+)</name>
        <dbReference type="ChEBI" id="CHEBI:29035"/>
        <label>1</label>
    </ligand>
</feature>
<feature type="binding site" evidence="1">
    <location>
        <position position="275"/>
    </location>
    <ligand>
        <name>Mn(2+)</name>
        <dbReference type="ChEBI" id="CHEBI:29035"/>
        <label>2</label>
    </ligand>
</feature>
<feature type="binding site" evidence="1">
    <location>
        <position position="293"/>
    </location>
    <ligand>
        <name>Mn(2+)</name>
        <dbReference type="ChEBI" id="CHEBI:29035"/>
        <label>2</label>
    </ligand>
</feature>
<feature type="binding site" evidence="1">
    <location>
        <position position="352"/>
    </location>
    <ligand>
        <name>Mn(2+)</name>
        <dbReference type="ChEBI" id="CHEBI:29035"/>
        <label>1</label>
    </ligand>
</feature>
<feature type="binding site" evidence="1">
    <location>
        <position position="354"/>
    </location>
    <ligand>
        <name>Mn(2+)</name>
        <dbReference type="ChEBI" id="CHEBI:29035"/>
        <label>1</label>
    </ligand>
</feature>
<feature type="binding site" evidence="1">
    <location>
        <position position="354"/>
    </location>
    <ligand>
        <name>Mn(2+)</name>
        <dbReference type="ChEBI" id="CHEBI:29035"/>
        <label>2</label>
    </ligand>
</feature>
<gene>
    <name evidence="1" type="primary">pepA</name>
    <name type="ordered locus">ECH74115_5781</name>
</gene>
<name>AMPA_ECO5E</name>
<organism>
    <name type="scientific">Escherichia coli O157:H7 (strain EC4115 / EHEC)</name>
    <dbReference type="NCBI Taxonomy" id="444450"/>
    <lineage>
        <taxon>Bacteria</taxon>
        <taxon>Pseudomonadati</taxon>
        <taxon>Pseudomonadota</taxon>
        <taxon>Gammaproteobacteria</taxon>
        <taxon>Enterobacterales</taxon>
        <taxon>Enterobacteriaceae</taxon>
        <taxon>Escherichia</taxon>
    </lineage>
</organism>
<sequence length="503" mass="54880">MEFSVKSGSPEKQRSACIVVGVFEPRRLSPIAEQLDKISDGYISALLRRGELEGKPGQTLLLHHVPNVLSERILLIGCGKERELDERQYKQVIQKTINTLNDTGSMEAVCFLTELHVKGRNNYWKVRQAVETAKETLYSFDQLKTNKSEPRRPLRKMVFNVPTRRELTSGERAIQHGLAIAAGIKAAKDLGNMPPNICNAAYLASQARQLADSYSKNVITRVIGEQQMKELGMHSYLAVGQGSQNESLMSVIEYKGNASEDARPIVLVGKGLTFDSGGISIKPSEGMDEMKYDMCGAAAVYGVMRMVAELQLPINVIGVLAGCENMPGGRAYRPGDVLTTMSGQTVEVLNTDAEGRLVLCDVLTYVERFEPEAVIDVATLTGACVIALGHHITGLMANHNPLAHELIAASEQSGDRAWRLPLGDEYQEQLESNFADMANIGGRPGGAITAGCFLSRFTRKYNWAHLDIAGTAWRSGKAKGATGRPVALLAQFLLNRAGFNGEE</sequence>
<evidence type="ECO:0000255" key="1">
    <source>
        <dbReference type="HAMAP-Rule" id="MF_00181"/>
    </source>
</evidence>
<reference key="1">
    <citation type="journal article" date="2011" name="Proc. Natl. Acad. Sci. U.S.A.">
        <title>Genomic anatomy of Escherichia coli O157:H7 outbreaks.</title>
        <authorList>
            <person name="Eppinger M."/>
            <person name="Mammel M.K."/>
            <person name="Leclerc J.E."/>
            <person name="Ravel J."/>
            <person name="Cebula T.A."/>
        </authorList>
    </citation>
    <scope>NUCLEOTIDE SEQUENCE [LARGE SCALE GENOMIC DNA]</scope>
    <source>
        <strain>EC4115 / EHEC</strain>
    </source>
</reference>
<comment type="function">
    <text evidence="1">Presumably involved in the processing and regular turnover of intracellular proteins. Catalyzes the removal of unsubstituted N-terminal amino acids from various peptides.</text>
</comment>
<comment type="catalytic activity">
    <reaction evidence="1">
        <text>Release of an N-terminal amino acid, Xaa-|-Yaa-, in which Xaa is preferably Leu, but may be other amino acids including Pro although not Arg or Lys, and Yaa may be Pro. Amino acid amides and methyl esters are also readily hydrolyzed, but rates on arylamides are exceedingly low.</text>
        <dbReference type="EC" id="3.4.11.1"/>
    </reaction>
</comment>
<comment type="catalytic activity">
    <reaction evidence="1">
        <text>Release of an N-terminal amino acid, preferentially leucine, but not glutamic or aspartic acids.</text>
        <dbReference type="EC" id="3.4.11.10"/>
    </reaction>
</comment>
<comment type="cofactor">
    <cofactor evidence="1">
        <name>Mn(2+)</name>
        <dbReference type="ChEBI" id="CHEBI:29035"/>
    </cofactor>
    <text evidence="1">Binds 2 manganese ions per subunit.</text>
</comment>
<comment type="subcellular location">
    <subcellularLocation>
        <location evidence="1">Cytoplasm</location>
    </subcellularLocation>
</comment>
<comment type="similarity">
    <text evidence="1">Belongs to the peptidase M17 family.</text>
</comment>
<dbReference type="EC" id="3.4.11.1" evidence="1"/>
<dbReference type="EC" id="3.4.11.10" evidence="1"/>
<dbReference type="EMBL" id="CP001164">
    <property type="protein sequence ID" value="ACI36294.1"/>
    <property type="molecule type" value="Genomic_DNA"/>
</dbReference>
<dbReference type="RefSeq" id="WP_000397144.1">
    <property type="nucleotide sequence ID" value="NC_011353.1"/>
</dbReference>
<dbReference type="SMR" id="B5Z3L7"/>
<dbReference type="MEROPS" id="M17.003"/>
<dbReference type="GeneID" id="93777558"/>
<dbReference type="KEGG" id="ecf:ECH74115_5781"/>
<dbReference type="HOGENOM" id="CLU_013734_2_2_6"/>
<dbReference type="GO" id="GO:0005737">
    <property type="term" value="C:cytoplasm"/>
    <property type="evidence" value="ECO:0007669"/>
    <property type="project" value="UniProtKB-SubCell"/>
</dbReference>
<dbReference type="GO" id="GO:0030145">
    <property type="term" value="F:manganese ion binding"/>
    <property type="evidence" value="ECO:0007669"/>
    <property type="project" value="UniProtKB-UniRule"/>
</dbReference>
<dbReference type="GO" id="GO:0070006">
    <property type="term" value="F:metalloaminopeptidase activity"/>
    <property type="evidence" value="ECO:0007669"/>
    <property type="project" value="InterPro"/>
</dbReference>
<dbReference type="GO" id="GO:0006508">
    <property type="term" value="P:proteolysis"/>
    <property type="evidence" value="ECO:0007669"/>
    <property type="project" value="UniProtKB-KW"/>
</dbReference>
<dbReference type="CDD" id="cd00433">
    <property type="entry name" value="Peptidase_M17"/>
    <property type="match status" value="1"/>
</dbReference>
<dbReference type="FunFam" id="3.40.220.10:FF:000001">
    <property type="entry name" value="Probable cytosol aminopeptidase"/>
    <property type="match status" value="1"/>
</dbReference>
<dbReference type="FunFam" id="3.40.630.10:FF:000004">
    <property type="entry name" value="Probable cytosol aminopeptidase"/>
    <property type="match status" value="1"/>
</dbReference>
<dbReference type="Gene3D" id="3.40.220.10">
    <property type="entry name" value="Leucine Aminopeptidase, subunit E, domain 1"/>
    <property type="match status" value="1"/>
</dbReference>
<dbReference type="Gene3D" id="3.40.630.10">
    <property type="entry name" value="Zn peptidases"/>
    <property type="match status" value="1"/>
</dbReference>
<dbReference type="HAMAP" id="MF_00181">
    <property type="entry name" value="Cytosol_peptidase_M17"/>
    <property type="match status" value="1"/>
</dbReference>
<dbReference type="InterPro" id="IPR011356">
    <property type="entry name" value="Leucine_aapep/pepB"/>
</dbReference>
<dbReference type="InterPro" id="IPR043472">
    <property type="entry name" value="Macro_dom-like"/>
</dbReference>
<dbReference type="InterPro" id="IPR000819">
    <property type="entry name" value="Peptidase_M17_C"/>
</dbReference>
<dbReference type="InterPro" id="IPR023042">
    <property type="entry name" value="Peptidase_M17_leu_NH2_pept"/>
</dbReference>
<dbReference type="InterPro" id="IPR008283">
    <property type="entry name" value="Peptidase_M17_N"/>
</dbReference>
<dbReference type="NCBIfam" id="NF002072">
    <property type="entry name" value="PRK00913.1-1"/>
    <property type="match status" value="1"/>
</dbReference>
<dbReference type="NCBIfam" id="NF002073">
    <property type="entry name" value="PRK00913.1-2"/>
    <property type="match status" value="1"/>
</dbReference>
<dbReference type="NCBIfam" id="NF002074">
    <property type="entry name" value="PRK00913.1-4"/>
    <property type="match status" value="1"/>
</dbReference>
<dbReference type="PANTHER" id="PTHR11963:SF23">
    <property type="entry name" value="CYTOSOL AMINOPEPTIDASE"/>
    <property type="match status" value="1"/>
</dbReference>
<dbReference type="PANTHER" id="PTHR11963">
    <property type="entry name" value="LEUCINE AMINOPEPTIDASE-RELATED"/>
    <property type="match status" value="1"/>
</dbReference>
<dbReference type="Pfam" id="PF00883">
    <property type="entry name" value="Peptidase_M17"/>
    <property type="match status" value="1"/>
</dbReference>
<dbReference type="Pfam" id="PF02789">
    <property type="entry name" value="Peptidase_M17_N"/>
    <property type="match status" value="1"/>
</dbReference>
<dbReference type="PRINTS" id="PR00481">
    <property type="entry name" value="LAMNOPPTDASE"/>
</dbReference>
<dbReference type="SUPFAM" id="SSF52949">
    <property type="entry name" value="Macro domain-like"/>
    <property type="match status" value="1"/>
</dbReference>
<dbReference type="SUPFAM" id="SSF53187">
    <property type="entry name" value="Zn-dependent exopeptidases"/>
    <property type="match status" value="1"/>
</dbReference>
<dbReference type="PROSITE" id="PS00631">
    <property type="entry name" value="CYTOSOL_AP"/>
    <property type="match status" value="1"/>
</dbReference>